<proteinExistence type="inferred from homology"/>
<protein>
    <recommendedName>
        <fullName evidence="1">Valine--tRNA ligase</fullName>
        <ecNumber evidence="1">6.1.1.9</ecNumber>
    </recommendedName>
    <alternativeName>
        <fullName evidence="1">Valyl-tRNA synthetase</fullName>
        <shortName evidence="1">ValRS</shortName>
    </alternativeName>
</protein>
<accession>P9WFS8</accession>
<accession>L0T9U7</accession>
<accession>O53175</accession>
<accession>P67599</accession>
<comment type="function">
    <text evidence="1">Catalyzes the attachment of valine to tRNA(Val). As ValRS can inadvertently accommodate and process structurally similar amino acids such as threonine, to avoid such errors, it has a 'posttransfer' editing activity that hydrolyzes mischarged Thr-tRNA(Val) in a tRNA-dependent manner.</text>
</comment>
<comment type="catalytic activity">
    <reaction evidence="1">
        <text>tRNA(Val) + L-valine + ATP = L-valyl-tRNA(Val) + AMP + diphosphate</text>
        <dbReference type="Rhea" id="RHEA:10704"/>
        <dbReference type="Rhea" id="RHEA-COMP:9672"/>
        <dbReference type="Rhea" id="RHEA-COMP:9708"/>
        <dbReference type="ChEBI" id="CHEBI:30616"/>
        <dbReference type="ChEBI" id="CHEBI:33019"/>
        <dbReference type="ChEBI" id="CHEBI:57762"/>
        <dbReference type="ChEBI" id="CHEBI:78442"/>
        <dbReference type="ChEBI" id="CHEBI:78537"/>
        <dbReference type="ChEBI" id="CHEBI:456215"/>
        <dbReference type="EC" id="6.1.1.9"/>
    </reaction>
</comment>
<comment type="subunit">
    <text evidence="1">Monomer.</text>
</comment>
<comment type="subcellular location">
    <subcellularLocation>
        <location evidence="1">Cytoplasm</location>
    </subcellularLocation>
</comment>
<comment type="domain">
    <text evidence="1">ValRS has two distinct active sites: one for aminoacylation and one for editing. The misactivated threonine is translocated from the active site to the editing site.</text>
</comment>
<comment type="domain">
    <text evidence="1">The C-terminal coiled-coil domain is crucial for aminoacylation activity.</text>
</comment>
<comment type="similarity">
    <text evidence="1">Belongs to the class-I aminoacyl-tRNA synthetase family. ValS type 1 subfamily.</text>
</comment>
<comment type="sequence caution" evidence="2">
    <conflict type="erroneous initiation">
        <sequence resource="EMBL-CDS" id="AAK46823"/>
    </conflict>
    <text>Truncated N-terminus.</text>
</comment>
<keyword id="KW-0030">Aminoacyl-tRNA synthetase</keyword>
<keyword id="KW-0067">ATP-binding</keyword>
<keyword id="KW-0175">Coiled coil</keyword>
<keyword id="KW-0963">Cytoplasm</keyword>
<keyword id="KW-0436">Ligase</keyword>
<keyword id="KW-0547">Nucleotide-binding</keyword>
<keyword id="KW-0648">Protein biosynthesis</keyword>
<keyword id="KW-1185">Reference proteome</keyword>
<name>SYV_MYCTO</name>
<organism>
    <name type="scientific">Mycobacterium tuberculosis (strain CDC 1551 / Oshkosh)</name>
    <dbReference type="NCBI Taxonomy" id="83331"/>
    <lineage>
        <taxon>Bacteria</taxon>
        <taxon>Bacillati</taxon>
        <taxon>Actinomycetota</taxon>
        <taxon>Actinomycetes</taxon>
        <taxon>Mycobacteriales</taxon>
        <taxon>Mycobacteriaceae</taxon>
        <taxon>Mycobacterium</taxon>
        <taxon>Mycobacterium tuberculosis complex</taxon>
    </lineage>
</organism>
<sequence>MTASPHPAADMLPKSWDPAAMESAIYQKWLDAGYFTADPTSTKPAYSIVLPPPNVTGSLHMGHALEHTMMDALTRRKRMQGYEVLWQPGTDHAGIATQSVVEQQLAVDGKTKEDLGRELFVDKVWDWKRESGGAIGGQMRRLGDGVDWSRDRFTMDEGLSRAVRTIFKRLYDAGLIYRAERLVNWSPVLQTAISDLEVNYRDVEGELVSFRYGSLDDSQPHIVVATTRVETMLGDTAIAVHPDDERYRHLVGTSLAHPFVDRELAIVADEHVDPEFGTGAVKVTPAHDPNDFEIGVRHQLPMPSILDTKGRIVDTGTRFDGMDRFEARVAVRQALAAQGRVVEEKRPYLHSVGHSERSGEPIEPRLSLQWWVRVESLAKAAGDAVRNGDTVIHPASMEPRWFSWVDDMHDWCISRQLWWGHRIPIWYGPDGEQVCVGPDETPPQGWEQDPDVLDTWFSSALWPFSTLGWPDKTAELEKFYPTSVLVTGYDILFFWVARMMMFGTFVGDDAAITLDGRRGPQVPFTDVFLHGLIRDESGRKMSKSKGNVIDPLDWVEMFGADALRFTLARGASPGGDLAVSEDAVRASRNFGTKLFNATRYALLNGAAPAPLPSPNELTDADRWILGRLEEVRAEVDSAFDGYEFSRACESLYHFAWDEFCDWYLELAKTQLAQGLTHTTAVLAAGLDTLLRLLHPVIPFLTEALWLALTGRESLVSADWPEPSGISVDLVAAQRINDMQKLVTEVRRFRSDQGLADRQKVPARMHGVRDSDLSNQVAAVTSLAWLTEPGPDFEPSVSLEVRLGPEMNRTVVVELDTSGTIDVAAERRRLEKELAGAQKELASTAAKLANADFLAKAPDAVIAKIRDRQRVAQQETERITTRLAALQ</sequence>
<reference key="1">
    <citation type="journal article" date="2002" name="J. Bacteriol.">
        <title>Whole-genome comparison of Mycobacterium tuberculosis clinical and laboratory strains.</title>
        <authorList>
            <person name="Fleischmann R.D."/>
            <person name="Alland D."/>
            <person name="Eisen J.A."/>
            <person name="Carpenter L."/>
            <person name="White O."/>
            <person name="Peterson J.D."/>
            <person name="DeBoy R.T."/>
            <person name="Dodson R.J."/>
            <person name="Gwinn M.L."/>
            <person name="Haft D.H."/>
            <person name="Hickey E.K."/>
            <person name="Kolonay J.F."/>
            <person name="Nelson W.C."/>
            <person name="Umayam L.A."/>
            <person name="Ermolaeva M.D."/>
            <person name="Salzberg S.L."/>
            <person name="Delcher A."/>
            <person name="Utterback T.R."/>
            <person name="Weidman J.F."/>
            <person name="Khouri H.M."/>
            <person name="Gill J."/>
            <person name="Mikula A."/>
            <person name="Bishai W."/>
            <person name="Jacobs W.R. Jr."/>
            <person name="Venter J.C."/>
            <person name="Fraser C.M."/>
        </authorList>
    </citation>
    <scope>NUCLEOTIDE SEQUENCE [LARGE SCALE GENOMIC DNA]</scope>
    <source>
        <strain>CDC 1551 / Oshkosh</strain>
    </source>
</reference>
<evidence type="ECO:0000255" key="1">
    <source>
        <dbReference type="HAMAP-Rule" id="MF_02004"/>
    </source>
</evidence>
<evidence type="ECO:0000305" key="2"/>
<feature type="chain" id="PRO_0000428484" description="Valine--tRNA ligase">
    <location>
        <begin position="1"/>
        <end position="886"/>
    </location>
</feature>
<feature type="coiled-coil region" evidence="1">
    <location>
        <begin position="819"/>
        <end position="851"/>
    </location>
</feature>
<feature type="short sequence motif" description="'HIGH' region">
    <location>
        <begin position="53"/>
        <end position="63"/>
    </location>
</feature>
<feature type="short sequence motif" description="'KMSKS' region">
    <location>
        <begin position="540"/>
        <end position="544"/>
    </location>
</feature>
<feature type="binding site" evidence="1">
    <location>
        <position position="543"/>
    </location>
    <ligand>
        <name>ATP</name>
        <dbReference type="ChEBI" id="CHEBI:30616"/>
    </ligand>
</feature>
<dbReference type="EC" id="6.1.1.9" evidence="1"/>
<dbReference type="EMBL" id="AE000516">
    <property type="protein sequence ID" value="AAK46823.1"/>
    <property type="status" value="ALT_INIT"/>
    <property type="molecule type" value="Genomic_DNA"/>
</dbReference>
<dbReference type="PIR" id="G70863">
    <property type="entry name" value="G70863"/>
</dbReference>
<dbReference type="RefSeq" id="WP_003412604.1">
    <property type="nucleotide sequence ID" value="NZ_KK341227.1"/>
</dbReference>
<dbReference type="SMR" id="P9WFS8"/>
<dbReference type="KEGG" id="mtc:MT2524"/>
<dbReference type="HOGENOM" id="CLU_001493_0_2_11"/>
<dbReference type="Proteomes" id="UP000001020">
    <property type="component" value="Chromosome"/>
</dbReference>
<dbReference type="GO" id="GO:0005829">
    <property type="term" value="C:cytosol"/>
    <property type="evidence" value="ECO:0007669"/>
    <property type="project" value="TreeGrafter"/>
</dbReference>
<dbReference type="GO" id="GO:0002161">
    <property type="term" value="F:aminoacyl-tRNA deacylase activity"/>
    <property type="evidence" value="ECO:0007669"/>
    <property type="project" value="InterPro"/>
</dbReference>
<dbReference type="GO" id="GO:0005524">
    <property type="term" value="F:ATP binding"/>
    <property type="evidence" value="ECO:0007669"/>
    <property type="project" value="UniProtKB-UniRule"/>
</dbReference>
<dbReference type="GO" id="GO:0004832">
    <property type="term" value="F:valine-tRNA ligase activity"/>
    <property type="evidence" value="ECO:0007669"/>
    <property type="project" value="UniProtKB-UniRule"/>
</dbReference>
<dbReference type="GO" id="GO:0006438">
    <property type="term" value="P:valyl-tRNA aminoacylation"/>
    <property type="evidence" value="ECO:0007669"/>
    <property type="project" value="UniProtKB-UniRule"/>
</dbReference>
<dbReference type="CDD" id="cd07962">
    <property type="entry name" value="Anticodon_Ia_Val"/>
    <property type="match status" value="1"/>
</dbReference>
<dbReference type="CDD" id="cd00817">
    <property type="entry name" value="ValRS_core"/>
    <property type="match status" value="1"/>
</dbReference>
<dbReference type="FunFam" id="1.10.287.380:FF:000001">
    <property type="entry name" value="Valine--tRNA ligase"/>
    <property type="match status" value="1"/>
</dbReference>
<dbReference type="FunFam" id="1.10.730.10:FF:000027">
    <property type="entry name" value="Valine--tRNA ligase"/>
    <property type="match status" value="1"/>
</dbReference>
<dbReference type="FunFam" id="3.40.50.620:FF:000098">
    <property type="entry name" value="Valine--tRNA ligase"/>
    <property type="match status" value="1"/>
</dbReference>
<dbReference type="FunFam" id="3.40.50.620:FF:000129">
    <property type="entry name" value="Valine--tRNA ligase"/>
    <property type="match status" value="1"/>
</dbReference>
<dbReference type="FunFam" id="3.90.740.10:FF:000005">
    <property type="entry name" value="Valine--tRNA ligase, mitochondrial"/>
    <property type="match status" value="1"/>
</dbReference>
<dbReference type="Gene3D" id="3.40.50.620">
    <property type="entry name" value="HUPs"/>
    <property type="match status" value="2"/>
</dbReference>
<dbReference type="Gene3D" id="1.10.730.10">
    <property type="entry name" value="Isoleucyl-tRNA Synthetase, Domain 1"/>
    <property type="match status" value="1"/>
</dbReference>
<dbReference type="Gene3D" id="1.10.287.380">
    <property type="entry name" value="Valyl-tRNA synthetase, C-terminal domain"/>
    <property type="match status" value="1"/>
</dbReference>
<dbReference type="Gene3D" id="3.90.740.10">
    <property type="entry name" value="Valyl/Leucyl/Isoleucyl-tRNA synthetase, editing domain"/>
    <property type="match status" value="1"/>
</dbReference>
<dbReference type="HAMAP" id="MF_02004">
    <property type="entry name" value="Val_tRNA_synth_type1"/>
    <property type="match status" value="1"/>
</dbReference>
<dbReference type="InterPro" id="IPR001412">
    <property type="entry name" value="aa-tRNA-synth_I_CS"/>
</dbReference>
<dbReference type="InterPro" id="IPR002300">
    <property type="entry name" value="aa-tRNA-synth_Ia"/>
</dbReference>
<dbReference type="InterPro" id="IPR033705">
    <property type="entry name" value="Anticodon_Ia_Val"/>
</dbReference>
<dbReference type="InterPro" id="IPR013155">
    <property type="entry name" value="M/V/L/I-tRNA-synth_anticd-bd"/>
</dbReference>
<dbReference type="InterPro" id="IPR014729">
    <property type="entry name" value="Rossmann-like_a/b/a_fold"/>
</dbReference>
<dbReference type="InterPro" id="IPR010978">
    <property type="entry name" value="tRNA-bd_arm"/>
</dbReference>
<dbReference type="InterPro" id="IPR009080">
    <property type="entry name" value="tRNAsynth_Ia_anticodon-bd"/>
</dbReference>
<dbReference type="InterPro" id="IPR037118">
    <property type="entry name" value="Val-tRNA_synth_C_sf"/>
</dbReference>
<dbReference type="InterPro" id="IPR019499">
    <property type="entry name" value="Val-tRNA_synth_tRNA-bd"/>
</dbReference>
<dbReference type="InterPro" id="IPR009008">
    <property type="entry name" value="Val/Leu/Ile-tRNA-synth_edit"/>
</dbReference>
<dbReference type="InterPro" id="IPR002303">
    <property type="entry name" value="Valyl-tRNA_ligase"/>
</dbReference>
<dbReference type="NCBIfam" id="NF004349">
    <property type="entry name" value="PRK05729.1"/>
    <property type="match status" value="1"/>
</dbReference>
<dbReference type="NCBIfam" id="TIGR00422">
    <property type="entry name" value="valS"/>
    <property type="match status" value="1"/>
</dbReference>
<dbReference type="PANTHER" id="PTHR11946:SF93">
    <property type="entry name" value="VALINE--TRNA LIGASE, CHLOROPLASTIC_MITOCHONDRIAL 2"/>
    <property type="match status" value="1"/>
</dbReference>
<dbReference type="PANTHER" id="PTHR11946">
    <property type="entry name" value="VALYL-TRNA SYNTHETASES"/>
    <property type="match status" value="1"/>
</dbReference>
<dbReference type="Pfam" id="PF08264">
    <property type="entry name" value="Anticodon_1"/>
    <property type="match status" value="1"/>
</dbReference>
<dbReference type="Pfam" id="PF00133">
    <property type="entry name" value="tRNA-synt_1"/>
    <property type="match status" value="2"/>
</dbReference>
<dbReference type="Pfam" id="PF10458">
    <property type="entry name" value="Val_tRNA-synt_C"/>
    <property type="match status" value="1"/>
</dbReference>
<dbReference type="PRINTS" id="PR00986">
    <property type="entry name" value="TRNASYNTHVAL"/>
</dbReference>
<dbReference type="SUPFAM" id="SSF47323">
    <property type="entry name" value="Anticodon-binding domain of a subclass of class I aminoacyl-tRNA synthetases"/>
    <property type="match status" value="1"/>
</dbReference>
<dbReference type="SUPFAM" id="SSF52374">
    <property type="entry name" value="Nucleotidylyl transferase"/>
    <property type="match status" value="1"/>
</dbReference>
<dbReference type="SUPFAM" id="SSF46589">
    <property type="entry name" value="tRNA-binding arm"/>
    <property type="match status" value="1"/>
</dbReference>
<dbReference type="SUPFAM" id="SSF50677">
    <property type="entry name" value="ValRS/IleRS/LeuRS editing domain"/>
    <property type="match status" value="1"/>
</dbReference>
<dbReference type="PROSITE" id="PS00178">
    <property type="entry name" value="AA_TRNA_LIGASE_I"/>
    <property type="match status" value="1"/>
</dbReference>
<gene>
    <name evidence="1" type="primary">valS</name>
    <name type="ordered locus">MT2524</name>
</gene>